<evidence type="ECO:0000250" key="1">
    <source>
        <dbReference type="UniProtKB" id="O94091"/>
    </source>
</evidence>
<evidence type="ECO:0000250" key="2">
    <source>
        <dbReference type="UniProtKB" id="W3VKA4"/>
    </source>
</evidence>
<evidence type="ECO:0000255" key="3"/>
<evidence type="ECO:0000269" key="4">
    <source>
    </source>
</evidence>
<evidence type="ECO:0000269" key="5">
    <source>
    </source>
</evidence>
<evidence type="ECO:0000303" key="6">
    <source>
    </source>
</evidence>
<evidence type="ECO:0000305" key="7"/>
<evidence type="ECO:0000305" key="8">
    <source>
    </source>
</evidence>
<accession>Q9P8W1</accession>
<accession>A0A1D8PQF5</accession>
<accession>Q59RY6</accession>
<sequence length="459" mass="49580">MLFLLFLLVAPIYAGLILPTKPSNDPFYNAPAGFEKAAVGEILQSRKTPKPITGVFVPVKIQNSWQLLVRSEDSFGNPNVIVTTVMEPFNADPSKLASYQVFEDSAKADCAPSYALQFGSDVTTIATQVETYLLAPLLDQGYYVVSPDYEGPKSTFTVGKQSGQAVLNSIRAALKSGKITNLAEDAKVVMWGYSGGSLASGWAAALQPNYAPELGGNLLGAALGGFVTNITATAEATDGTVFAGIMANALGGVANEYPEFKQILQNDTDKQSVFDQFDNHCLADGVINYIGKHFLSGTNKIFKSGWNILKNPTISKIVEDNGLVYQKQLVPKIPILIYHGAIDQIVPIVNVKKTYQNWCDAGIASLEFSEDATNGHITETIVGAPVALTWIINRFNGKQTVSGCQHVKRTSNFEYPNIPPSILNYFKAALNILIQKGLGPDIQKDQVNPDGLKKIPILV</sequence>
<dbReference type="EC" id="3.1.1.3" evidence="1"/>
<dbReference type="EMBL" id="AF191317">
    <property type="protein sequence ID" value="AAF69521.1"/>
    <property type="molecule type" value="Genomic_DNA"/>
</dbReference>
<dbReference type="EMBL" id="CP017628">
    <property type="protein sequence ID" value="AOW30365.1"/>
    <property type="molecule type" value="Genomic_DNA"/>
</dbReference>
<dbReference type="RefSeq" id="XP_712408.2">
    <property type="nucleotide sequence ID" value="XM_707315.2"/>
</dbReference>
<dbReference type="SMR" id="Q9P8W1"/>
<dbReference type="STRING" id="237561.Q9P8W1"/>
<dbReference type="ESTHER" id="canal-LIP4">
    <property type="family name" value="Fungal-Bact_LIP"/>
</dbReference>
<dbReference type="GlyCosmos" id="Q9P8W1">
    <property type="glycosylation" value="2 sites, No reported glycans"/>
</dbReference>
<dbReference type="EnsemblFungi" id="C6_04490W_A-T">
    <property type="protein sequence ID" value="C6_04490W_A-T-p1"/>
    <property type="gene ID" value="C6_04490W_A"/>
</dbReference>
<dbReference type="GeneID" id="3645987"/>
<dbReference type="KEGG" id="cal:CAALFM_C604490WA"/>
<dbReference type="CGD" id="CAL0000184506">
    <property type="gene designation" value="LIP4"/>
</dbReference>
<dbReference type="VEuPathDB" id="FungiDB:C6_04490W_A"/>
<dbReference type="eggNOG" id="ENOG502SI7U">
    <property type="taxonomic scope" value="Eukaryota"/>
</dbReference>
<dbReference type="HOGENOM" id="CLU_029538_5_0_1"/>
<dbReference type="InParanoid" id="Q9P8W1"/>
<dbReference type="OrthoDB" id="2373480at2759"/>
<dbReference type="Proteomes" id="UP000000559">
    <property type="component" value="Chromosome 6"/>
</dbReference>
<dbReference type="GO" id="GO:0005576">
    <property type="term" value="C:extracellular region"/>
    <property type="evidence" value="ECO:0007669"/>
    <property type="project" value="UniProtKB-SubCell"/>
</dbReference>
<dbReference type="GO" id="GO:0016298">
    <property type="term" value="F:lipase activity"/>
    <property type="evidence" value="ECO:0000314"/>
    <property type="project" value="CGD"/>
</dbReference>
<dbReference type="GO" id="GO:0004806">
    <property type="term" value="F:triacylglycerol lipase activity"/>
    <property type="evidence" value="ECO:0007669"/>
    <property type="project" value="UniProtKB-EC"/>
</dbReference>
<dbReference type="GO" id="GO:0016042">
    <property type="term" value="P:lipid catabolic process"/>
    <property type="evidence" value="ECO:0007669"/>
    <property type="project" value="UniProtKB-KW"/>
</dbReference>
<dbReference type="FunFam" id="1.10.260.130:FF:000001">
    <property type="entry name" value="Lipase 2"/>
    <property type="match status" value="1"/>
</dbReference>
<dbReference type="Gene3D" id="1.10.260.130">
    <property type="match status" value="1"/>
</dbReference>
<dbReference type="Gene3D" id="3.40.50.1820">
    <property type="entry name" value="alpha/beta hydrolase"/>
    <property type="match status" value="1"/>
</dbReference>
<dbReference type="InterPro" id="IPR029058">
    <property type="entry name" value="AB_hydrolase_fold"/>
</dbReference>
<dbReference type="InterPro" id="IPR005152">
    <property type="entry name" value="Lipase_secreted"/>
</dbReference>
<dbReference type="PANTHER" id="PTHR34853">
    <property type="match status" value="1"/>
</dbReference>
<dbReference type="PANTHER" id="PTHR34853:SF1">
    <property type="entry name" value="LIPASE 5"/>
    <property type="match status" value="1"/>
</dbReference>
<dbReference type="Pfam" id="PF03583">
    <property type="entry name" value="LIP"/>
    <property type="match status" value="1"/>
</dbReference>
<dbReference type="PIRSF" id="PIRSF029171">
    <property type="entry name" value="Esterase_LipA"/>
    <property type="match status" value="1"/>
</dbReference>
<dbReference type="SUPFAM" id="SSF53474">
    <property type="entry name" value="alpha/beta-Hydrolases"/>
    <property type="match status" value="1"/>
</dbReference>
<keyword id="KW-1015">Disulfide bond</keyword>
<keyword id="KW-0325">Glycoprotein</keyword>
<keyword id="KW-0378">Hydrolase</keyword>
<keyword id="KW-0442">Lipid degradation</keyword>
<keyword id="KW-0443">Lipid metabolism</keyword>
<keyword id="KW-1185">Reference proteome</keyword>
<keyword id="KW-0964">Secreted</keyword>
<keyword id="KW-0732">Signal</keyword>
<keyword id="KW-0843">Virulence</keyword>
<organism>
    <name type="scientific">Candida albicans (strain SC5314 / ATCC MYA-2876)</name>
    <name type="common">Yeast</name>
    <dbReference type="NCBI Taxonomy" id="237561"/>
    <lineage>
        <taxon>Eukaryota</taxon>
        <taxon>Fungi</taxon>
        <taxon>Dikarya</taxon>
        <taxon>Ascomycota</taxon>
        <taxon>Saccharomycotina</taxon>
        <taxon>Pichiomycetes</taxon>
        <taxon>Debaryomycetaceae</taxon>
        <taxon>Candida/Lodderomyces clade</taxon>
        <taxon>Candida</taxon>
    </lineage>
</organism>
<feature type="signal peptide" evidence="3">
    <location>
        <begin position="1"/>
        <end position="14"/>
    </location>
</feature>
<feature type="chain" id="PRO_0000017823" description="Lipase 4">
    <location>
        <begin position="15"/>
        <end position="459"/>
    </location>
</feature>
<feature type="active site" description="Charge relay system" evidence="2">
    <location>
        <position position="194"/>
    </location>
</feature>
<feature type="active site" description="Charge relay system" evidence="2">
    <location>
        <position position="343"/>
    </location>
</feature>
<feature type="active site" description="Charge relay system" evidence="2">
    <location>
        <position position="376"/>
    </location>
</feature>
<feature type="glycosylation site" description="N-linked (GlcNAc...) asparagine" evidence="3">
    <location>
        <position position="229"/>
    </location>
</feature>
<feature type="glycosylation site" description="N-linked (GlcNAc...) asparagine" evidence="3">
    <location>
        <position position="266"/>
    </location>
</feature>
<feature type="disulfide bond" evidence="2">
    <location>
        <begin position="110"/>
        <end position="281"/>
    </location>
</feature>
<feature type="disulfide bond" evidence="2">
    <location>
        <begin position="359"/>
        <end position="404"/>
    </location>
</feature>
<feature type="sequence conflict" description="In Ref. 1; AAF69521." evidence="7" ref="1">
    <original>E</original>
    <variation>D</variation>
    <location>
        <position position="41"/>
    </location>
</feature>
<feature type="sequence conflict" description="In Ref. 1; AAF69521." evidence="7" ref="1">
    <original>D</original>
    <variation>N</variation>
    <location>
        <position position="185"/>
    </location>
</feature>
<feature type="sequence conflict" description="In Ref. 1; AAF69521." evidence="7" ref="1">
    <original>P</original>
    <variation>S</variation>
    <location>
        <position position="456"/>
    </location>
</feature>
<name>LIP4_CANAL</name>
<protein>
    <recommendedName>
        <fullName evidence="6">Lipase 4</fullName>
        <ecNumber evidence="1">3.1.1.3</ecNumber>
    </recommendedName>
</protein>
<proteinExistence type="evidence at transcript level"/>
<comment type="function">
    <text evidence="4 8">Secreted lipase that is able to hydrolyze both the neutral triacylglycerols and the monopalmitate ester Tween 40, allowing the use of hydrolyzed products as carbon sources (PubMed:11131027). Has broad lipolytic activity, which may be important for colonization and subsequent infection, therefore contributing to the persistence and virulence in human tissue (Probable).</text>
</comment>
<comment type="catalytic activity">
    <reaction evidence="1">
        <text>a triacylglycerol + H2O = a diacylglycerol + a fatty acid + H(+)</text>
        <dbReference type="Rhea" id="RHEA:12044"/>
        <dbReference type="ChEBI" id="CHEBI:15377"/>
        <dbReference type="ChEBI" id="CHEBI:15378"/>
        <dbReference type="ChEBI" id="CHEBI:17855"/>
        <dbReference type="ChEBI" id="CHEBI:18035"/>
        <dbReference type="ChEBI" id="CHEBI:28868"/>
        <dbReference type="EC" id="3.1.1.3"/>
    </reaction>
    <physiologicalReaction direction="left-to-right" evidence="1">
        <dbReference type="Rhea" id="RHEA:12045"/>
    </physiologicalReaction>
</comment>
<comment type="subcellular location">
    <subcellularLocation>
        <location evidence="4">Secreted</location>
    </subcellularLocation>
</comment>
<comment type="induction">
    <text evidence="4 5">Expression is induced in medium containing Tween 40 as the sole source of carbon (PubMed:11131027). Expression is up-regulated during the yeast-to-hyphal transition (PubMed:11131027). Expressed in host cecum and infected mucosal tissues (stomach, hard palate, esophagus and tongue) (PubMed:15766791). Expressed more strongly during mucosal infections than during systemic infections (PubMed:15766791).</text>
</comment>
<comment type="similarity">
    <text evidence="7">Belongs to the AB hydrolase superfamily. Lipase family. Class Lip subfamily.</text>
</comment>
<reference key="1">
    <citation type="journal article" date="2000" name="Arch. Microbiol.">
        <title>Secreted lipases of Candida albicans: cloning, characterisation and expression analysis of a new gene family with at least ten members.</title>
        <authorList>
            <person name="Hube B."/>
            <person name="Stehr F."/>
            <person name="Bossenz M."/>
            <person name="Mazur A."/>
            <person name="Kretschmar M."/>
            <person name="Schaefer W."/>
        </authorList>
    </citation>
    <scope>NUCLEOTIDE SEQUENCE [GENOMIC DNA]</scope>
    <scope>SUBCELLULAR LOCATION</scope>
    <scope>FUNCTION</scope>
    <scope>INDUCTION</scope>
    <source>
        <strain>1161</strain>
    </source>
</reference>
<reference key="2">
    <citation type="journal article" date="2004" name="Proc. Natl. Acad. Sci. U.S.A.">
        <title>The diploid genome sequence of Candida albicans.</title>
        <authorList>
            <person name="Jones T."/>
            <person name="Federspiel N.A."/>
            <person name="Chibana H."/>
            <person name="Dungan J."/>
            <person name="Kalman S."/>
            <person name="Magee B.B."/>
            <person name="Newport G."/>
            <person name="Thorstenson Y.R."/>
            <person name="Agabian N."/>
            <person name="Magee P.T."/>
            <person name="Davis R.W."/>
            <person name="Scherer S."/>
        </authorList>
    </citation>
    <scope>NUCLEOTIDE SEQUENCE [LARGE SCALE GENOMIC DNA]</scope>
    <source>
        <strain>SC5314 / ATCC MYA-2876</strain>
    </source>
</reference>
<reference key="3">
    <citation type="journal article" date="2007" name="Genome Biol.">
        <title>Assembly of the Candida albicans genome into sixteen supercontigs aligned on the eight chromosomes.</title>
        <authorList>
            <person name="van het Hoog M."/>
            <person name="Rast T.J."/>
            <person name="Martchenko M."/>
            <person name="Grindle S."/>
            <person name="Dignard D."/>
            <person name="Hogues H."/>
            <person name="Cuomo C."/>
            <person name="Berriman M."/>
            <person name="Scherer S."/>
            <person name="Magee B.B."/>
            <person name="Whiteway M."/>
            <person name="Chibana H."/>
            <person name="Nantel A."/>
            <person name="Magee P.T."/>
        </authorList>
    </citation>
    <scope>GENOME REANNOTATION</scope>
    <source>
        <strain>SC5314 / ATCC MYA-2876</strain>
    </source>
</reference>
<reference key="4">
    <citation type="journal article" date="2013" name="Genome Biol.">
        <title>Assembly of a phased diploid Candida albicans genome facilitates allele-specific measurements and provides a simple model for repeat and indel structure.</title>
        <authorList>
            <person name="Muzzey D."/>
            <person name="Schwartz K."/>
            <person name="Weissman J.S."/>
            <person name="Sherlock G."/>
        </authorList>
    </citation>
    <scope>NUCLEOTIDE SEQUENCE [LARGE SCALE GENOMIC DNA]</scope>
    <scope>GENOME REANNOTATION</scope>
    <source>
        <strain>SC5314 / ATCC MYA-2876</strain>
    </source>
</reference>
<reference key="5">
    <citation type="journal article" date="2004" name="FEMS Yeast Res.">
        <title>Expression analysis of the Candida albicans lipase gene family during experimental infections and in patient samples.</title>
        <authorList>
            <person name="Stehr F."/>
            <person name="Felk A."/>
            <person name="Gacser A."/>
            <person name="Kretschmar M."/>
            <person name="Maehnss B."/>
            <person name="Neuber K."/>
            <person name="Hube B."/>
            <person name="Schaefer W."/>
        </authorList>
    </citation>
    <scope>INDUCTION</scope>
</reference>
<reference key="6">
    <citation type="journal article" date="2005" name="FEMS Microbiol. Lett.">
        <title>Differential Candida albicans lipase gene expression during alimentary tract colonization and infection.</title>
        <authorList>
            <person name="Schofield D.A."/>
            <person name="Westwater C."/>
            <person name="Warner T."/>
            <person name="Balish E."/>
        </authorList>
    </citation>
    <scope>INDUCTION</scope>
</reference>
<gene>
    <name evidence="6" type="primary">LIP4</name>
    <name type="ordered locus">CAALFM_C604490WA</name>
    <name type="ORF">CaO19.2133</name>
</gene>